<gene>
    <name type="primary">SHU2</name>
    <name type="ORF">VL3_0812</name>
</gene>
<dbReference type="EMBL" id="AEJS01000016">
    <property type="protein sequence ID" value="EGA87573.1"/>
    <property type="molecule type" value="Genomic_DNA"/>
</dbReference>
<dbReference type="SMR" id="E7QCS8"/>
<dbReference type="HOGENOM" id="CLU_1115918_0_0_1"/>
<dbReference type="OrthoDB" id="4066852at2759"/>
<dbReference type="GO" id="GO:0005634">
    <property type="term" value="C:nucleus"/>
    <property type="evidence" value="ECO:0007669"/>
    <property type="project" value="UniProtKB-SubCell"/>
</dbReference>
<dbReference type="GO" id="GO:0006310">
    <property type="term" value="P:DNA recombination"/>
    <property type="evidence" value="ECO:0007669"/>
    <property type="project" value="UniProtKB-KW"/>
</dbReference>
<dbReference type="GO" id="GO:0006281">
    <property type="term" value="P:DNA repair"/>
    <property type="evidence" value="ECO:0007669"/>
    <property type="project" value="UniProtKB-KW"/>
</dbReference>
<name>SHU2_YEASZ</name>
<comment type="function">
    <text evidence="1">Plays a role in a RAD51/RAD54-dependent homologous recombination repair (HRR) pathway to repair MMS-induced lesions during S-phase. Required for error-free repair of spontaneous and induced DNA lesions to protect the genome from mutation (By similarity).</text>
</comment>
<comment type="subunit">
    <text evidence="1">Component of the SHU complex composed of at least CSM2, PSY3, SHU1 and SHU2.</text>
</comment>
<comment type="subcellular location">
    <subcellularLocation>
        <location evidence="1">Nucleus</location>
    </subcellularLocation>
</comment>
<comment type="similarity">
    <text evidence="2">Belongs to the SHU2 family.</text>
</comment>
<protein>
    <recommendedName>
        <fullName>Suppressor of hydroxyurea sensitivity protein 2</fullName>
    </recommendedName>
</protein>
<organism>
    <name type="scientific">Saccharomyces cerevisiae (strain Zymaflore VL3)</name>
    <name type="common">Baker's yeast</name>
    <dbReference type="NCBI Taxonomy" id="764100"/>
    <lineage>
        <taxon>Eukaryota</taxon>
        <taxon>Fungi</taxon>
        <taxon>Dikarya</taxon>
        <taxon>Ascomycota</taxon>
        <taxon>Saccharomycotina</taxon>
        <taxon>Saccharomycetes</taxon>
        <taxon>Saccharomycetales</taxon>
        <taxon>Saccharomycetaceae</taxon>
        <taxon>Saccharomyces</taxon>
    </lineage>
</organism>
<keyword id="KW-0227">DNA damage</keyword>
<keyword id="KW-0233">DNA recombination</keyword>
<keyword id="KW-0234">DNA repair</keyword>
<keyword id="KW-0539">Nucleus</keyword>
<proteinExistence type="inferred from homology"/>
<sequence length="223" mass="26137">MSKDVIEYSKLFAKLVNTNDDTKLDDTIASFLYYMFPRELFIRAISLLESSDMFIYILDRVHNKEGNEHTSLIDVLVDEFYKGSSNSLLEYRLIVKDTNDGAPPILVDIAHWFCSCEEFCKYFHEALEKTDEKEELHDVLINEVDDHLQFSDDRFAQLDPHSLSKQWYFKFDKICCSHLLAFSILLRSSINVLKFFTVNSNKVFVIAIDNIDEWLNLHINIVE</sequence>
<evidence type="ECO:0000250" key="1"/>
<evidence type="ECO:0000305" key="2"/>
<accession>E7QCS8</accession>
<feature type="chain" id="PRO_0000409746" description="Suppressor of hydroxyurea sensitivity protein 2">
    <location>
        <begin position="1"/>
        <end position="223"/>
    </location>
</feature>
<reference key="1">
    <citation type="journal article" date="2011" name="PLoS Genet.">
        <title>Whole-genome comparison reveals novel genetic elements that characterize the genome of industrial strains of Saccharomyces cerevisiae.</title>
        <authorList>
            <person name="Borneman A.R."/>
            <person name="Desany B.A."/>
            <person name="Riches D."/>
            <person name="Affourtit J.P."/>
            <person name="Forgan A.H."/>
            <person name="Pretorius I.S."/>
            <person name="Egholm M."/>
            <person name="Chambers P.J."/>
        </authorList>
    </citation>
    <scope>NUCLEOTIDE SEQUENCE [LARGE SCALE GENOMIC DNA]</scope>
    <source>
        <strain>Zymaflore VL3</strain>
    </source>
</reference>